<proteinExistence type="evidence at protein level"/>
<accession>Q09768</accession>
<gene>
    <name type="primary">gcs1</name>
    <name type="ORF">SPAC22F3.10c</name>
</gene>
<name>GSH1_SCHPO</name>
<sequence length="669" mass="76523">MGLLVLGTPLDWPESKKYCDYVRENGIMQFLHMYDTYISKKQDVLLWGDEIECIVVSMDDKSKKARVSLRQEDILNALGKYEETFRHVDFGPVYAALRNETCPKKIDAILSEVAKNPADYVERIGGNSNKDTIEITSSTKPHAQNAVPTFHPEYGRYMLESTPGAPYGSTLKDFTFVEYNMRLRRKIIENHLLPNELPLTITNFFRLGTPGFTDPEVEANGAISRSFFLPDDVINTHVRFPTLTANIRQRRGRKVAMNVPIFFDKNTIKPFHDPTVPWDRNLFPEDANARDGAALDNHIYMDSMGFGMGCCCLQITFQAKSCDEARLLYDQLTPITPLMLALSAGTPAFRGYLADQDCRWNVIAGAVDDRTEEEMKTVPKSRYDSVDLYISNDKRNLPEYNDVPVVINQDCYDKLIKDCIDERLAKHMAHIFSRDPLVIFSDSILQDNSVSNAHFENLNSTNWQSMRFKPPPPGSDIGWRVEFRSMEIQITDFENAAYSIFVVMLSRAILSFNLNLYMPISLVDENMKAAHARDAIHRKKFWFRCNPFPDASTDDESGQFRQLTIDELFNGEHRENGFPGLITIVRSYLYSCNPDAKTICLIERYIRLISQRANGQCLTAASWIRNFITTHPSYKQDSVVNDEINYDLIRRIAKIVDGDYDDTLLGKCS</sequence>
<protein>
    <recommendedName>
        <fullName>Glutamate--cysteine ligase</fullName>
        <ecNumber evidence="3">6.3.2.2</ecNumber>
    </recommendedName>
    <alternativeName>
        <fullName>Gamma-ECS</fullName>
        <shortName>GCS</shortName>
    </alternativeName>
    <alternativeName>
        <fullName>Gamma-glutamylcysteine synthetase</fullName>
    </alternativeName>
</protein>
<dbReference type="EC" id="6.3.2.2" evidence="3"/>
<dbReference type="EMBL" id="X85017">
    <property type="protein sequence ID" value="CAA59379.1"/>
    <property type="molecule type" value="Genomic_DNA"/>
</dbReference>
<dbReference type="EMBL" id="D55676">
    <property type="protein sequence ID" value="BAA09527.1"/>
    <property type="molecule type" value="Genomic_DNA"/>
</dbReference>
<dbReference type="EMBL" id="CU329670">
    <property type="protein sequence ID" value="CAA91075.1"/>
    <property type="molecule type" value="Genomic_DNA"/>
</dbReference>
<dbReference type="PIR" id="T38181">
    <property type="entry name" value="T38181"/>
</dbReference>
<dbReference type="RefSeq" id="NP_593031.1">
    <property type="nucleotide sequence ID" value="NM_001018430.2"/>
</dbReference>
<dbReference type="SMR" id="Q09768"/>
<dbReference type="BioGRID" id="278371">
    <property type="interactions" value="5"/>
</dbReference>
<dbReference type="FunCoup" id="Q09768">
    <property type="interactions" value="251"/>
</dbReference>
<dbReference type="STRING" id="284812.Q09768"/>
<dbReference type="iPTMnet" id="Q09768"/>
<dbReference type="PaxDb" id="4896-SPAC22F3.10c.1"/>
<dbReference type="EnsemblFungi" id="SPAC22F3.10c.1">
    <property type="protein sequence ID" value="SPAC22F3.10c.1:pep"/>
    <property type="gene ID" value="SPAC22F3.10c"/>
</dbReference>
<dbReference type="GeneID" id="2541881"/>
<dbReference type="KEGG" id="spo:2541881"/>
<dbReference type="PomBase" id="SPAC22F3.10c">
    <property type="gene designation" value="gcs1"/>
</dbReference>
<dbReference type="VEuPathDB" id="FungiDB:SPAC22F3.10c"/>
<dbReference type="eggNOG" id="KOG3754">
    <property type="taxonomic scope" value="Eukaryota"/>
</dbReference>
<dbReference type="HOGENOM" id="CLU_010467_0_0_1"/>
<dbReference type="InParanoid" id="Q09768"/>
<dbReference type="OMA" id="IAHMFIR"/>
<dbReference type="PhylomeDB" id="Q09768"/>
<dbReference type="BRENDA" id="6.3.2.2">
    <property type="organism ID" value="5613"/>
</dbReference>
<dbReference type="Reactome" id="R-SPO-174403">
    <property type="pathway name" value="Glutathione synthesis and recycling"/>
</dbReference>
<dbReference type="UniPathway" id="UPA00142">
    <property type="reaction ID" value="UER00209"/>
</dbReference>
<dbReference type="PRO" id="PR:Q09768"/>
<dbReference type="Proteomes" id="UP000002485">
    <property type="component" value="Chromosome I"/>
</dbReference>
<dbReference type="GO" id="GO:0005829">
    <property type="term" value="C:cytosol"/>
    <property type="evidence" value="ECO:0007005"/>
    <property type="project" value="PomBase"/>
</dbReference>
<dbReference type="GO" id="GO:0017109">
    <property type="term" value="C:glutamate-cysteine ligase complex"/>
    <property type="evidence" value="ECO:0000318"/>
    <property type="project" value="GO_Central"/>
</dbReference>
<dbReference type="GO" id="GO:0005634">
    <property type="term" value="C:nucleus"/>
    <property type="evidence" value="ECO:0007005"/>
    <property type="project" value="PomBase"/>
</dbReference>
<dbReference type="GO" id="GO:0005524">
    <property type="term" value="F:ATP binding"/>
    <property type="evidence" value="ECO:0007669"/>
    <property type="project" value="UniProtKB-KW"/>
</dbReference>
<dbReference type="GO" id="GO:0004357">
    <property type="term" value="F:glutamate-cysteine ligase activity"/>
    <property type="evidence" value="ECO:0000315"/>
    <property type="project" value="PomBase"/>
</dbReference>
<dbReference type="GO" id="GO:0098849">
    <property type="term" value="P:cellular detoxification of cadmium ion"/>
    <property type="evidence" value="ECO:0000315"/>
    <property type="project" value="PomBase"/>
</dbReference>
<dbReference type="GO" id="GO:0071276">
    <property type="term" value="P:cellular response to cadmium ion"/>
    <property type="evidence" value="ECO:0000315"/>
    <property type="project" value="PomBase"/>
</dbReference>
<dbReference type="GO" id="GO:0006534">
    <property type="term" value="P:cysteine metabolic process"/>
    <property type="evidence" value="ECO:0000305"/>
    <property type="project" value="PomBase"/>
</dbReference>
<dbReference type="GO" id="GO:0006750">
    <property type="term" value="P:glutathione biosynthetic process"/>
    <property type="evidence" value="ECO:0000315"/>
    <property type="project" value="PomBase"/>
</dbReference>
<dbReference type="GO" id="GO:0046938">
    <property type="term" value="P:phytochelatin biosynthetic process"/>
    <property type="evidence" value="ECO:0000315"/>
    <property type="project" value="PomBase"/>
</dbReference>
<dbReference type="FunFam" id="3.30.590.50:FF:000002">
    <property type="entry name" value="Glutamate--cysteine ligase catalytic subunit"/>
    <property type="match status" value="1"/>
</dbReference>
<dbReference type="Gene3D" id="1.10.8.960">
    <property type="match status" value="1"/>
</dbReference>
<dbReference type="Gene3D" id="3.30.590.50">
    <property type="match status" value="2"/>
</dbReference>
<dbReference type="InterPro" id="IPR004308">
    <property type="entry name" value="GCS"/>
</dbReference>
<dbReference type="InterPro" id="IPR014746">
    <property type="entry name" value="Gln_synth/guanido_kin_cat_dom"/>
</dbReference>
<dbReference type="InterPro" id="IPR012340">
    <property type="entry name" value="NA-bd_OB-fold"/>
</dbReference>
<dbReference type="PANTHER" id="PTHR11164">
    <property type="entry name" value="GLUTAMATE CYSTEINE LIGASE"/>
    <property type="match status" value="1"/>
</dbReference>
<dbReference type="PANTHER" id="PTHR11164:SF0">
    <property type="entry name" value="GLUTAMATE--CYSTEINE LIGASE CATALYTIC SUBUNIT"/>
    <property type="match status" value="1"/>
</dbReference>
<dbReference type="Pfam" id="PF03074">
    <property type="entry name" value="GCS"/>
    <property type="match status" value="1"/>
</dbReference>
<dbReference type="SUPFAM" id="SSF55931">
    <property type="entry name" value="Glutamine synthetase/guanido kinase"/>
    <property type="match status" value="1"/>
</dbReference>
<dbReference type="SUPFAM" id="SSF50249">
    <property type="entry name" value="Nucleic acid-binding proteins"/>
    <property type="match status" value="1"/>
</dbReference>
<reference key="1">
    <citation type="journal article" date="1995" name="Yeast">
        <title>Gcs1, a gene encoding gamma-glutamylcysteine synthetase in the fission yeast Schizosaccharomyces pombe.</title>
        <authorList>
            <person name="Coblenz A."/>
            <person name="Wolf K."/>
        </authorList>
    </citation>
    <scope>NUCLEOTIDE SEQUENCE [GENOMIC DNA]</scope>
    <scope>CATALYTIC ACTIVITY</scope>
    <scope>PATHWAY</scope>
    <source>
        <strain>D18</strain>
    </source>
</reference>
<reference key="2">
    <citation type="journal article" date="1995" name="J. Biochem.">
        <title>Molecular cloning and nucleotide sequencing of the gamma-glutamylcysteine synthetase gene of the fission yeast Schizosaccharomyces pombe.</title>
        <authorList>
            <person name="Mutoh N."/>
        </authorList>
    </citation>
    <scope>NUCLEOTIDE SEQUENCE [GENOMIC DNA]</scope>
</reference>
<reference key="3">
    <citation type="journal article" date="2002" name="Nature">
        <title>The genome sequence of Schizosaccharomyces pombe.</title>
        <authorList>
            <person name="Wood V."/>
            <person name="Gwilliam R."/>
            <person name="Rajandream M.A."/>
            <person name="Lyne M.H."/>
            <person name="Lyne R."/>
            <person name="Stewart A."/>
            <person name="Sgouros J.G."/>
            <person name="Peat N."/>
            <person name="Hayles J."/>
            <person name="Baker S.G."/>
            <person name="Basham D."/>
            <person name="Bowman S."/>
            <person name="Brooks K."/>
            <person name="Brown D."/>
            <person name="Brown S."/>
            <person name="Chillingworth T."/>
            <person name="Churcher C.M."/>
            <person name="Collins M."/>
            <person name="Connor R."/>
            <person name="Cronin A."/>
            <person name="Davis P."/>
            <person name="Feltwell T."/>
            <person name="Fraser A."/>
            <person name="Gentles S."/>
            <person name="Goble A."/>
            <person name="Hamlin N."/>
            <person name="Harris D.E."/>
            <person name="Hidalgo J."/>
            <person name="Hodgson G."/>
            <person name="Holroyd S."/>
            <person name="Hornsby T."/>
            <person name="Howarth S."/>
            <person name="Huckle E.J."/>
            <person name="Hunt S."/>
            <person name="Jagels K."/>
            <person name="James K.D."/>
            <person name="Jones L."/>
            <person name="Jones M."/>
            <person name="Leather S."/>
            <person name="McDonald S."/>
            <person name="McLean J."/>
            <person name="Mooney P."/>
            <person name="Moule S."/>
            <person name="Mungall K.L."/>
            <person name="Murphy L.D."/>
            <person name="Niblett D."/>
            <person name="Odell C."/>
            <person name="Oliver K."/>
            <person name="O'Neil S."/>
            <person name="Pearson D."/>
            <person name="Quail M.A."/>
            <person name="Rabbinowitsch E."/>
            <person name="Rutherford K.M."/>
            <person name="Rutter S."/>
            <person name="Saunders D."/>
            <person name="Seeger K."/>
            <person name="Sharp S."/>
            <person name="Skelton J."/>
            <person name="Simmonds M.N."/>
            <person name="Squares R."/>
            <person name="Squares S."/>
            <person name="Stevens K."/>
            <person name="Taylor K."/>
            <person name="Taylor R.G."/>
            <person name="Tivey A."/>
            <person name="Walsh S.V."/>
            <person name="Warren T."/>
            <person name="Whitehead S."/>
            <person name="Woodward J.R."/>
            <person name="Volckaert G."/>
            <person name="Aert R."/>
            <person name="Robben J."/>
            <person name="Grymonprez B."/>
            <person name="Weltjens I."/>
            <person name="Vanstreels E."/>
            <person name="Rieger M."/>
            <person name="Schaefer M."/>
            <person name="Mueller-Auer S."/>
            <person name="Gabel C."/>
            <person name="Fuchs M."/>
            <person name="Duesterhoeft A."/>
            <person name="Fritzc C."/>
            <person name="Holzer E."/>
            <person name="Moestl D."/>
            <person name="Hilbert H."/>
            <person name="Borzym K."/>
            <person name="Langer I."/>
            <person name="Beck A."/>
            <person name="Lehrach H."/>
            <person name="Reinhardt R."/>
            <person name="Pohl T.M."/>
            <person name="Eger P."/>
            <person name="Zimmermann W."/>
            <person name="Wedler H."/>
            <person name="Wambutt R."/>
            <person name="Purnelle B."/>
            <person name="Goffeau A."/>
            <person name="Cadieu E."/>
            <person name="Dreano S."/>
            <person name="Gloux S."/>
            <person name="Lelaure V."/>
            <person name="Mottier S."/>
            <person name="Galibert F."/>
            <person name="Aves S.J."/>
            <person name="Xiang Z."/>
            <person name="Hunt C."/>
            <person name="Moore K."/>
            <person name="Hurst S.M."/>
            <person name="Lucas M."/>
            <person name="Rochet M."/>
            <person name="Gaillardin C."/>
            <person name="Tallada V.A."/>
            <person name="Garzon A."/>
            <person name="Thode G."/>
            <person name="Daga R.R."/>
            <person name="Cruzado L."/>
            <person name="Jimenez J."/>
            <person name="Sanchez M."/>
            <person name="del Rey F."/>
            <person name="Benito J."/>
            <person name="Dominguez A."/>
            <person name="Revuelta J.L."/>
            <person name="Moreno S."/>
            <person name="Armstrong J."/>
            <person name="Forsburg S.L."/>
            <person name="Cerutti L."/>
            <person name="Lowe T."/>
            <person name="McCombie W.R."/>
            <person name="Paulsen I."/>
            <person name="Potashkin J."/>
            <person name="Shpakovski G.V."/>
            <person name="Ussery D."/>
            <person name="Barrell B.G."/>
            <person name="Nurse P."/>
        </authorList>
    </citation>
    <scope>NUCLEOTIDE SEQUENCE [LARGE SCALE GENOMIC DNA]</scope>
    <source>
        <strain>972 / ATCC 24843</strain>
    </source>
</reference>
<keyword id="KW-0067">ATP-binding</keyword>
<keyword id="KW-0317">Glutathione biosynthesis</keyword>
<keyword id="KW-0436">Ligase</keyword>
<keyword id="KW-0547">Nucleotide-binding</keyword>
<keyword id="KW-1185">Reference proteome</keyword>
<feature type="chain" id="PRO_0000192571" description="Glutamate--cysteine ligase">
    <location>
        <begin position="1"/>
        <end position="669"/>
    </location>
</feature>
<feature type="sequence conflict" description="In Ref. 1." evidence="2" ref="1">
    <original>M</original>
    <variation>I</variation>
    <location>
        <position position="28"/>
    </location>
</feature>
<feature type="sequence conflict" description="In Ref. 1; CAA59379." evidence="2" ref="1">
    <location>
        <begin position="79"/>
        <end position="123"/>
    </location>
</feature>
<feature type="sequence conflict" description="In Ref. 2; BAA09527." evidence="2" ref="2">
    <original>K</original>
    <variation>N</variation>
    <location>
        <position position="105"/>
    </location>
</feature>
<feature type="sequence conflict" description="In Ref. 2; BAA09527." evidence="2" ref="2">
    <original>E</original>
    <variation>A</variation>
    <location>
        <position position="399"/>
    </location>
</feature>
<evidence type="ECO:0000250" key="1"/>
<evidence type="ECO:0000305" key="2"/>
<evidence type="ECO:0000305" key="3">
    <source>
    </source>
</evidence>
<comment type="function">
    <text evidence="3">Catalyzes the ATP-dependent ligation of L-glutamate and L-cysteine and participates in the first and rate-limiting step in glutathione biosynthesis.</text>
</comment>
<comment type="catalytic activity">
    <reaction evidence="3">
        <text>L-cysteine + L-glutamate + ATP = gamma-L-glutamyl-L-cysteine + ADP + phosphate + H(+)</text>
        <dbReference type="Rhea" id="RHEA:13285"/>
        <dbReference type="ChEBI" id="CHEBI:15378"/>
        <dbReference type="ChEBI" id="CHEBI:29985"/>
        <dbReference type="ChEBI" id="CHEBI:30616"/>
        <dbReference type="ChEBI" id="CHEBI:35235"/>
        <dbReference type="ChEBI" id="CHEBI:43474"/>
        <dbReference type="ChEBI" id="CHEBI:58173"/>
        <dbReference type="ChEBI" id="CHEBI:456216"/>
        <dbReference type="EC" id="6.3.2.2"/>
    </reaction>
</comment>
<comment type="pathway">
    <text evidence="3">Sulfur metabolism; glutathione biosynthesis; glutathione from L-cysteine and L-glutamate: step 1/2.</text>
</comment>
<comment type="subunit">
    <text evidence="1">Heterodimer of a catalytic heavy chain and a regulatory light chain.</text>
</comment>
<comment type="similarity">
    <text evidence="2">Belongs to the glutamate--cysteine ligase type 3 family.</text>
</comment>
<organism>
    <name type="scientific">Schizosaccharomyces pombe (strain 972 / ATCC 24843)</name>
    <name type="common">Fission yeast</name>
    <dbReference type="NCBI Taxonomy" id="284812"/>
    <lineage>
        <taxon>Eukaryota</taxon>
        <taxon>Fungi</taxon>
        <taxon>Dikarya</taxon>
        <taxon>Ascomycota</taxon>
        <taxon>Taphrinomycotina</taxon>
        <taxon>Schizosaccharomycetes</taxon>
        <taxon>Schizosaccharomycetales</taxon>
        <taxon>Schizosaccharomycetaceae</taxon>
        <taxon>Schizosaccharomyces</taxon>
    </lineage>
</organism>